<gene>
    <name type="primary">Tpsb2</name>
    <name type="synonym">Mcp6</name>
    <name type="synonym">Mcpt6</name>
</gene>
<dbReference type="EC" id="3.4.21.59"/>
<dbReference type="EMBL" id="D38455">
    <property type="protein sequence ID" value="BAA07486.1"/>
    <property type="molecule type" value="mRNA"/>
</dbReference>
<dbReference type="EMBL" id="U67909">
    <property type="protein sequence ID" value="AAB48262.1"/>
    <property type="molecule type" value="mRNA"/>
</dbReference>
<dbReference type="PIR" id="JC4171">
    <property type="entry name" value="JC4171"/>
</dbReference>
<dbReference type="RefSeq" id="NP_062053.2">
    <property type="nucleotide sequence ID" value="NM_019180.2"/>
</dbReference>
<dbReference type="SMR" id="P50343"/>
<dbReference type="FunCoup" id="P50343">
    <property type="interactions" value="45"/>
</dbReference>
<dbReference type="STRING" id="10116.ENSRNOP00000025220"/>
<dbReference type="MEROPS" id="S01.025"/>
<dbReference type="GlyCosmos" id="P50343">
    <property type="glycosylation" value="2 sites, No reported glycans"/>
</dbReference>
<dbReference type="GlyGen" id="P50343">
    <property type="glycosylation" value="2 sites"/>
</dbReference>
<dbReference type="PhosphoSitePlus" id="P50343"/>
<dbReference type="PaxDb" id="10116-ENSRNOP00000025220"/>
<dbReference type="GeneID" id="29268"/>
<dbReference type="KEGG" id="rno:29268"/>
<dbReference type="UCSC" id="RGD:3065">
    <property type="organism name" value="rat"/>
</dbReference>
<dbReference type="AGR" id="RGD:3065"/>
<dbReference type="CTD" id="64499"/>
<dbReference type="RGD" id="3065">
    <property type="gene designation" value="Tpsb2"/>
</dbReference>
<dbReference type="eggNOG" id="KOG3627">
    <property type="taxonomic scope" value="Eukaryota"/>
</dbReference>
<dbReference type="InParanoid" id="P50343"/>
<dbReference type="OrthoDB" id="10002959at2759"/>
<dbReference type="PhylomeDB" id="P50343"/>
<dbReference type="Reactome" id="R-RNO-1592389">
    <property type="pathway name" value="Activation of Matrix Metalloproteinases"/>
</dbReference>
<dbReference type="PRO" id="PR:P50343"/>
<dbReference type="Proteomes" id="UP000002494">
    <property type="component" value="Unplaced"/>
</dbReference>
<dbReference type="GO" id="GO:0005615">
    <property type="term" value="C:extracellular space"/>
    <property type="evidence" value="ECO:0000318"/>
    <property type="project" value="GO_Central"/>
</dbReference>
<dbReference type="GO" id="GO:0008201">
    <property type="term" value="F:heparin binding"/>
    <property type="evidence" value="ECO:0000266"/>
    <property type="project" value="RGD"/>
</dbReference>
<dbReference type="GO" id="GO:0008233">
    <property type="term" value="F:peptidase activity"/>
    <property type="evidence" value="ECO:0000266"/>
    <property type="project" value="RGD"/>
</dbReference>
<dbReference type="GO" id="GO:0004252">
    <property type="term" value="F:serine-type endopeptidase activity"/>
    <property type="evidence" value="ECO:0000318"/>
    <property type="project" value="GO_Central"/>
</dbReference>
<dbReference type="GO" id="GO:0006508">
    <property type="term" value="P:proteolysis"/>
    <property type="evidence" value="ECO:0000318"/>
    <property type="project" value="GO_Central"/>
</dbReference>
<dbReference type="CDD" id="cd00190">
    <property type="entry name" value="Tryp_SPc"/>
    <property type="match status" value="1"/>
</dbReference>
<dbReference type="FunFam" id="2.40.10.10:FF:000039">
    <property type="entry name" value="Brain-specific serine protease 4"/>
    <property type="match status" value="1"/>
</dbReference>
<dbReference type="Gene3D" id="2.40.10.10">
    <property type="entry name" value="Trypsin-like serine proteases"/>
    <property type="match status" value="2"/>
</dbReference>
<dbReference type="InterPro" id="IPR009003">
    <property type="entry name" value="Peptidase_S1_PA"/>
</dbReference>
<dbReference type="InterPro" id="IPR043504">
    <property type="entry name" value="Peptidase_S1_PA_chymotrypsin"/>
</dbReference>
<dbReference type="InterPro" id="IPR001314">
    <property type="entry name" value="Peptidase_S1A"/>
</dbReference>
<dbReference type="InterPro" id="IPR001254">
    <property type="entry name" value="Trypsin_dom"/>
</dbReference>
<dbReference type="InterPro" id="IPR018114">
    <property type="entry name" value="TRYPSIN_HIS"/>
</dbReference>
<dbReference type="InterPro" id="IPR033116">
    <property type="entry name" value="TRYPSIN_SER"/>
</dbReference>
<dbReference type="PANTHER" id="PTHR24253:SF144">
    <property type="entry name" value="CHYMOTRYPSIN-LIKE PROTEASE CTRL-1-RELATED"/>
    <property type="match status" value="1"/>
</dbReference>
<dbReference type="PANTHER" id="PTHR24253">
    <property type="entry name" value="TRANSMEMBRANE PROTEASE SERINE"/>
    <property type="match status" value="1"/>
</dbReference>
<dbReference type="Pfam" id="PF00089">
    <property type="entry name" value="Trypsin"/>
    <property type="match status" value="1"/>
</dbReference>
<dbReference type="PRINTS" id="PR00722">
    <property type="entry name" value="CHYMOTRYPSIN"/>
</dbReference>
<dbReference type="SMART" id="SM00020">
    <property type="entry name" value="Tryp_SPc"/>
    <property type="match status" value="1"/>
</dbReference>
<dbReference type="SUPFAM" id="SSF50494">
    <property type="entry name" value="Trypsin-like serine proteases"/>
    <property type="match status" value="1"/>
</dbReference>
<dbReference type="PROSITE" id="PS50240">
    <property type="entry name" value="TRYPSIN_DOM"/>
    <property type="match status" value="1"/>
</dbReference>
<dbReference type="PROSITE" id="PS00134">
    <property type="entry name" value="TRYPSIN_HIS"/>
    <property type="match status" value="1"/>
</dbReference>
<dbReference type="PROSITE" id="PS00135">
    <property type="entry name" value="TRYPSIN_SER"/>
    <property type="match status" value="1"/>
</dbReference>
<keyword id="KW-1015">Disulfide bond</keyword>
<keyword id="KW-0325">Glycoprotein</keyword>
<keyword id="KW-0378">Hydrolase</keyword>
<keyword id="KW-0597">Phosphoprotein</keyword>
<keyword id="KW-0645">Protease</keyword>
<keyword id="KW-1185">Reference proteome</keyword>
<keyword id="KW-0964">Secreted</keyword>
<keyword id="KW-0720">Serine protease</keyword>
<keyword id="KW-0732">Signal</keyword>
<keyword id="KW-0865">Zymogen</keyword>
<evidence type="ECO:0000250" key="1"/>
<evidence type="ECO:0000250" key="2">
    <source>
        <dbReference type="UniProtKB" id="P21845"/>
    </source>
</evidence>
<evidence type="ECO:0000255" key="3"/>
<evidence type="ECO:0000255" key="4">
    <source>
        <dbReference type="PROSITE-ProRule" id="PRU00274"/>
    </source>
</evidence>
<evidence type="ECO:0000305" key="5"/>
<protein>
    <recommendedName>
        <fullName>Tryptase beta-2</fullName>
        <shortName>Tryptase-2</shortName>
        <ecNumber>3.4.21.59</ecNumber>
    </recommendedName>
    <alternativeName>
        <fullName>Mast cell protease 6</fullName>
        <shortName>rMCP-6</shortName>
    </alternativeName>
</protein>
<accession>P50343</accession>
<accession>P97593</accession>
<feature type="signal peptide" evidence="3">
    <location>
        <begin position="1"/>
        <end position="19"/>
    </location>
</feature>
<feature type="propeptide" id="PRO_0000027492" description="Activation peptide">
    <location>
        <begin position="20"/>
        <end position="29"/>
    </location>
</feature>
<feature type="chain" id="PRO_0000027493" description="Tryptase beta-2">
    <location>
        <begin position="30"/>
        <end position="274"/>
    </location>
</feature>
<feature type="domain" description="Peptidase S1" evidence="4">
    <location>
        <begin position="30"/>
        <end position="271"/>
    </location>
</feature>
<feature type="active site" description="Charge relay system" evidence="1">
    <location>
        <position position="73"/>
    </location>
</feature>
<feature type="active site" description="Charge relay system" evidence="1">
    <location>
        <position position="120"/>
    </location>
</feature>
<feature type="active site" description="Charge relay system" evidence="1">
    <location>
        <position position="223"/>
    </location>
</feature>
<feature type="modified residue" description="Phosphotyrosine" evidence="2">
    <location>
        <position position="96"/>
    </location>
</feature>
<feature type="glycosylation site" description="N-linked (GlcNAc...) asparagine" evidence="3">
    <location>
        <position position="104"/>
    </location>
</feature>
<feature type="glycosylation site" description="N-linked (GlcNAc...) asparagine" evidence="3">
    <location>
        <position position="131"/>
    </location>
</feature>
<feature type="disulfide bond" evidence="4">
    <location>
        <begin position="58"/>
        <end position="74"/>
    </location>
</feature>
<feature type="disulfide bond" evidence="4">
    <location>
        <begin position="154"/>
        <end position="229"/>
    </location>
</feature>
<feature type="disulfide bond" evidence="4">
    <location>
        <begin position="187"/>
        <end position="210"/>
    </location>
</feature>
<feature type="disulfide bond" evidence="4">
    <location>
        <begin position="219"/>
        <end position="247"/>
    </location>
</feature>
<feature type="sequence conflict" description="In Ref. 2; AAB48262." evidence="5" ref="2">
    <original>I</original>
    <variation>N</variation>
    <location>
        <position position="128"/>
    </location>
</feature>
<feature type="sequence conflict" description="In Ref. 2; AAB48262." evidence="5" ref="2">
    <original>I</original>
    <variation>T</variation>
    <location>
        <position position="139"/>
    </location>
</feature>
<reference key="1">
    <citation type="journal article" date="1995" name="J. Biochem.">
        <title>cDNA sequencing and expression of rat mast cell tryptase.</title>
        <authorList>
            <person name="Ide H."/>
            <person name="Itoh H."/>
            <person name="Tomita M."/>
            <person name="Murakumo Y."/>
            <person name="Kobayashi T."/>
            <person name="Maruyama H."/>
            <person name="Osada Y."/>
            <person name="Nawa Y."/>
        </authorList>
    </citation>
    <scope>NUCLEOTIDE SEQUENCE [MRNA]</scope>
    <source>
        <tissue>Peritoneal mast cell</tissue>
    </source>
</reference>
<reference key="2">
    <citation type="journal article" date="1997" name="J. Exp. Med.">
        <title>Secretory granule proteases in rat mast cells. Cloning of 10 different serine proteases and a carboxypeptidase A from various rat mast cell populations.</title>
        <authorList>
            <person name="Lutzelschwab C."/>
            <person name="Pejler G."/>
            <person name="Aveskogh M."/>
            <person name="Hellman L."/>
        </authorList>
    </citation>
    <scope>NUCLEOTIDE SEQUENCE [MRNA]</scope>
    <source>
        <strain>Sprague-Dawley</strain>
        <tissue>Peritoneal mast cell</tissue>
    </source>
</reference>
<comment type="function">
    <text evidence="1 2">Tryptase is the major neutral protease present in mast cells and is secreted upon the coupled activation-degranulation response of this cell type. Plays a role in innate immunity.</text>
</comment>
<comment type="catalytic activity">
    <reaction>
        <text>Preferential cleavage: Arg-|-Xaa, Lys-|-Xaa, but with more restricted specificity than trypsin.</text>
        <dbReference type="EC" id="3.4.21.59"/>
    </reaction>
</comment>
<comment type="subunit">
    <text>Homotetramer. The active tetramer is converted to inactive monomers at neutral and acidic pH in the absence of heparin. Low concentrations of inactive monomers become active monomers at pH 6.0 in the presence of heparin. When the concentration of active monomers is higher, they convert to active monomers and then to active tetramers. These monomers are active and functionally distinct from the tetrameric enzyme. In contrast to the hidden active sites in the tetrameric form, the active site of the monomeric form is accessible for macromolecular proteins and inhibitors, e.g. fibrinogen which is a substrate for the monomeric but not for the tetrameric form. The monomeric form forms a complex with SERPINB6.</text>
</comment>
<comment type="subcellular location">
    <subcellularLocation>
        <location evidence="1">Secreted</location>
    </subcellularLocation>
    <text evidence="1">Released from the secretory granules upon mast cell activation.</text>
</comment>
<comment type="similarity">
    <text evidence="4">Belongs to the peptidase S1 family. Tryptase subfamily.</text>
</comment>
<name>TRYB2_RAT</name>
<proteinExistence type="evidence at transcript level"/>
<organism>
    <name type="scientific">Rattus norvegicus</name>
    <name type="common">Rat</name>
    <dbReference type="NCBI Taxonomy" id="10116"/>
    <lineage>
        <taxon>Eukaryota</taxon>
        <taxon>Metazoa</taxon>
        <taxon>Chordata</taxon>
        <taxon>Craniata</taxon>
        <taxon>Vertebrata</taxon>
        <taxon>Euteleostomi</taxon>
        <taxon>Mammalia</taxon>
        <taxon>Eutheria</taxon>
        <taxon>Euarchontoglires</taxon>
        <taxon>Glires</taxon>
        <taxon>Rodentia</taxon>
        <taxon>Myomorpha</taxon>
        <taxon>Muroidea</taxon>
        <taxon>Muridae</taxon>
        <taxon>Murinae</taxon>
        <taxon>Rattus</taxon>
    </lineage>
</organism>
<sequence length="274" mass="30508">MLKLLLLLALSPLASLVHAAPCPVKQRVGIVGGREASESKWPWQVSLRFKFSFWMHFCGGSLIHPQWVLTAAHCVGLHIKSPELFRVQLREQYLYYADQLLTVNRTVVHPHYYTVEDGADIALLELEIPVNVSTHIHPISLPPASETFPSGTSCWVTGWGDIDSDEPLLPPYPLKQVKVPIVENSLCDRKYHTGLYTGDDVPIVQDGMLCAGNTRSDSCQGDSGGPLVCKVKGTWLQAGVVSWGEGCAEANRPGIYTRVTYYLDWIHRYVPQRS</sequence>